<name>FOLD_LIGS1</name>
<keyword id="KW-0028">Amino-acid biosynthesis</keyword>
<keyword id="KW-0368">Histidine biosynthesis</keyword>
<keyword id="KW-0378">Hydrolase</keyword>
<keyword id="KW-0486">Methionine biosynthesis</keyword>
<keyword id="KW-0511">Multifunctional enzyme</keyword>
<keyword id="KW-0521">NADP</keyword>
<keyword id="KW-0554">One-carbon metabolism</keyword>
<keyword id="KW-0560">Oxidoreductase</keyword>
<keyword id="KW-0658">Purine biosynthesis</keyword>
<keyword id="KW-1185">Reference proteome</keyword>
<feature type="chain" id="PRO_0000268379" description="Bifunctional protein FolD">
    <location>
        <begin position="1"/>
        <end position="285"/>
    </location>
</feature>
<feature type="binding site" evidence="1">
    <location>
        <begin position="165"/>
        <end position="167"/>
    </location>
    <ligand>
        <name>NADP(+)</name>
        <dbReference type="ChEBI" id="CHEBI:58349"/>
    </ligand>
</feature>
<feature type="binding site" evidence="1">
    <location>
        <position position="190"/>
    </location>
    <ligand>
        <name>NADP(+)</name>
        <dbReference type="ChEBI" id="CHEBI:58349"/>
    </ligand>
</feature>
<gene>
    <name evidence="1" type="primary">folD</name>
    <name type="ordered locus">LSL_0533</name>
</gene>
<reference key="1">
    <citation type="journal article" date="2006" name="Proc. Natl. Acad. Sci. U.S.A.">
        <title>Multireplicon genome architecture of Lactobacillus salivarius.</title>
        <authorList>
            <person name="Claesson M.J."/>
            <person name="Li Y."/>
            <person name="Leahy S."/>
            <person name="Canchaya C."/>
            <person name="van Pijkeren J.P."/>
            <person name="Cerdeno-Tarraga A.M."/>
            <person name="Parkhill J."/>
            <person name="Flynn S."/>
            <person name="O'Sullivan G.C."/>
            <person name="Collins J.K."/>
            <person name="Higgins D."/>
            <person name="Shanahan F."/>
            <person name="Fitzgerald G.F."/>
            <person name="van Sinderen D."/>
            <person name="O'Toole P.W."/>
        </authorList>
    </citation>
    <scope>NUCLEOTIDE SEQUENCE [LARGE SCALE GENOMIC DNA]</scope>
    <source>
        <strain>UCC118</strain>
    </source>
</reference>
<proteinExistence type="inferred from homology"/>
<accession>Q1WUJ3</accession>
<protein>
    <recommendedName>
        <fullName evidence="1">Bifunctional protein FolD</fullName>
    </recommendedName>
    <domain>
        <recommendedName>
            <fullName evidence="1">Methylenetetrahydrofolate dehydrogenase</fullName>
            <ecNumber evidence="1">1.5.1.5</ecNumber>
        </recommendedName>
    </domain>
    <domain>
        <recommendedName>
            <fullName evidence="1">Methenyltetrahydrofolate cyclohydrolase</fullName>
            <ecNumber evidence="1">3.5.4.9</ecNumber>
        </recommendedName>
    </domain>
</protein>
<comment type="function">
    <text evidence="1">Catalyzes the oxidation of 5,10-methylenetetrahydrofolate to 5,10-methenyltetrahydrofolate and then the hydrolysis of 5,10-methenyltetrahydrofolate to 10-formyltetrahydrofolate.</text>
</comment>
<comment type="catalytic activity">
    <reaction evidence="1">
        <text>(6R)-5,10-methylene-5,6,7,8-tetrahydrofolate + NADP(+) = (6R)-5,10-methenyltetrahydrofolate + NADPH</text>
        <dbReference type="Rhea" id="RHEA:22812"/>
        <dbReference type="ChEBI" id="CHEBI:15636"/>
        <dbReference type="ChEBI" id="CHEBI:57455"/>
        <dbReference type="ChEBI" id="CHEBI:57783"/>
        <dbReference type="ChEBI" id="CHEBI:58349"/>
        <dbReference type="EC" id="1.5.1.5"/>
    </reaction>
</comment>
<comment type="catalytic activity">
    <reaction evidence="1">
        <text>(6R)-5,10-methenyltetrahydrofolate + H2O = (6R)-10-formyltetrahydrofolate + H(+)</text>
        <dbReference type="Rhea" id="RHEA:23700"/>
        <dbReference type="ChEBI" id="CHEBI:15377"/>
        <dbReference type="ChEBI" id="CHEBI:15378"/>
        <dbReference type="ChEBI" id="CHEBI:57455"/>
        <dbReference type="ChEBI" id="CHEBI:195366"/>
        <dbReference type="EC" id="3.5.4.9"/>
    </reaction>
</comment>
<comment type="pathway">
    <text evidence="1">One-carbon metabolism; tetrahydrofolate interconversion.</text>
</comment>
<comment type="subunit">
    <text evidence="1">Homodimer.</text>
</comment>
<comment type="similarity">
    <text evidence="1">Belongs to the tetrahydrofolate dehydrogenase/cyclohydrolase family.</text>
</comment>
<organism>
    <name type="scientific">Ligilactobacillus salivarius (strain UCC118)</name>
    <name type="common">Lactobacillus salivarius</name>
    <dbReference type="NCBI Taxonomy" id="362948"/>
    <lineage>
        <taxon>Bacteria</taxon>
        <taxon>Bacillati</taxon>
        <taxon>Bacillota</taxon>
        <taxon>Bacilli</taxon>
        <taxon>Lactobacillales</taxon>
        <taxon>Lactobacillaceae</taxon>
        <taxon>Ligilactobacillus</taxon>
    </lineage>
</organism>
<sequence>MVATILDGRMLSKKIRTNVSEKVSLLKQEGITPKLVVILVGEDPASQVYVRNKRKTAHALGIEAVDIRLPENVEEDELIRLIDELNSDGTVHGILVQLPLPKHINENKVTHRIIPEKDVDGFHPLNIGKLFMNIPGPLPCTPRGIMEFFKEYDIPVSGKRVVIVGRSNIVGRPMAALLVNSDATVTIAHSKTKNLAEVTKQADILIVAIGKGEFIDENYVKKGAVVIDVGMNRNNDGKLVGDVNMESVSKVASYITPVPGGVGPMTIAMLMKQTVELAERSVAGE</sequence>
<evidence type="ECO:0000255" key="1">
    <source>
        <dbReference type="HAMAP-Rule" id="MF_01576"/>
    </source>
</evidence>
<dbReference type="EC" id="1.5.1.5" evidence="1"/>
<dbReference type="EC" id="3.5.4.9" evidence="1"/>
<dbReference type="EMBL" id="CP000233">
    <property type="protein sequence ID" value="ABD99342.1"/>
    <property type="molecule type" value="Genomic_DNA"/>
</dbReference>
<dbReference type="RefSeq" id="WP_011475808.1">
    <property type="nucleotide sequence ID" value="NC_007929.1"/>
</dbReference>
<dbReference type="RefSeq" id="YP_535425.1">
    <property type="nucleotide sequence ID" value="NC_007929.1"/>
</dbReference>
<dbReference type="SMR" id="Q1WUJ3"/>
<dbReference type="STRING" id="362948.LSL_0533"/>
<dbReference type="KEGG" id="lsl:LSL_0533"/>
<dbReference type="PATRIC" id="fig|362948.14.peg.611"/>
<dbReference type="HOGENOM" id="CLU_034045_2_1_9"/>
<dbReference type="OrthoDB" id="9803580at2"/>
<dbReference type="UniPathway" id="UPA00193"/>
<dbReference type="Proteomes" id="UP000006559">
    <property type="component" value="Chromosome"/>
</dbReference>
<dbReference type="GO" id="GO:0005829">
    <property type="term" value="C:cytosol"/>
    <property type="evidence" value="ECO:0007669"/>
    <property type="project" value="TreeGrafter"/>
</dbReference>
<dbReference type="GO" id="GO:0004477">
    <property type="term" value="F:methenyltetrahydrofolate cyclohydrolase activity"/>
    <property type="evidence" value="ECO:0007669"/>
    <property type="project" value="UniProtKB-UniRule"/>
</dbReference>
<dbReference type="GO" id="GO:0004488">
    <property type="term" value="F:methylenetetrahydrofolate dehydrogenase (NADP+) activity"/>
    <property type="evidence" value="ECO:0007669"/>
    <property type="project" value="UniProtKB-UniRule"/>
</dbReference>
<dbReference type="GO" id="GO:0000105">
    <property type="term" value="P:L-histidine biosynthetic process"/>
    <property type="evidence" value="ECO:0007669"/>
    <property type="project" value="UniProtKB-KW"/>
</dbReference>
<dbReference type="GO" id="GO:0009086">
    <property type="term" value="P:methionine biosynthetic process"/>
    <property type="evidence" value="ECO:0007669"/>
    <property type="project" value="UniProtKB-KW"/>
</dbReference>
<dbReference type="GO" id="GO:0006164">
    <property type="term" value="P:purine nucleotide biosynthetic process"/>
    <property type="evidence" value="ECO:0007669"/>
    <property type="project" value="UniProtKB-KW"/>
</dbReference>
<dbReference type="GO" id="GO:0035999">
    <property type="term" value="P:tetrahydrofolate interconversion"/>
    <property type="evidence" value="ECO:0007669"/>
    <property type="project" value="UniProtKB-UniRule"/>
</dbReference>
<dbReference type="CDD" id="cd01080">
    <property type="entry name" value="NAD_bind_m-THF_DH_Cyclohyd"/>
    <property type="match status" value="1"/>
</dbReference>
<dbReference type="FunFam" id="3.40.50.720:FF:000094">
    <property type="entry name" value="Bifunctional protein FolD"/>
    <property type="match status" value="1"/>
</dbReference>
<dbReference type="FunFam" id="3.40.50.10860:FF:000005">
    <property type="entry name" value="C-1-tetrahydrofolate synthase, cytoplasmic, putative"/>
    <property type="match status" value="1"/>
</dbReference>
<dbReference type="Gene3D" id="3.40.50.10860">
    <property type="entry name" value="Leucine Dehydrogenase, chain A, domain 1"/>
    <property type="match status" value="1"/>
</dbReference>
<dbReference type="Gene3D" id="3.40.50.720">
    <property type="entry name" value="NAD(P)-binding Rossmann-like Domain"/>
    <property type="match status" value="1"/>
</dbReference>
<dbReference type="HAMAP" id="MF_01576">
    <property type="entry name" value="THF_DHG_CYH"/>
    <property type="match status" value="1"/>
</dbReference>
<dbReference type="InterPro" id="IPR046346">
    <property type="entry name" value="Aminoacid_DH-like_N_sf"/>
</dbReference>
<dbReference type="InterPro" id="IPR036291">
    <property type="entry name" value="NAD(P)-bd_dom_sf"/>
</dbReference>
<dbReference type="InterPro" id="IPR000672">
    <property type="entry name" value="THF_DH/CycHdrlase"/>
</dbReference>
<dbReference type="InterPro" id="IPR020630">
    <property type="entry name" value="THF_DH/CycHdrlase_cat_dom"/>
</dbReference>
<dbReference type="InterPro" id="IPR020867">
    <property type="entry name" value="THF_DH/CycHdrlase_CS"/>
</dbReference>
<dbReference type="InterPro" id="IPR020631">
    <property type="entry name" value="THF_DH/CycHdrlase_NAD-bd_dom"/>
</dbReference>
<dbReference type="NCBIfam" id="NF008058">
    <property type="entry name" value="PRK10792.1"/>
    <property type="match status" value="1"/>
</dbReference>
<dbReference type="NCBIfam" id="NF010783">
    <property type="entry name" value="PRK14186.1"/>
    <property type="match status" value="1"/>
</dbReference>
<dbReference type="PANTHER" id="PTHR48099:SF5">
    <property type="entry name" value="C-1-TETRAHYDROFOLATE SYNTHASE, CYTOPLASMIC"/>
    <property type="match status" value="1"/>
</dbReference>
<dbReference type="PANTHER" id="PTHR48099">
    <property type="entry name" value="C-1-TETRAHYDROFOLATE SYNTHASE, CYTOPLASMIC-RELATED"/>
    <property type="match status" value="1"/>
</dbReference>
<dbReference type="Pfam" id="PF00763">
    <property type="entry name" value="THF_DHG_CYH"/>
    <property type="match status" value="1"/>
</dbReference>
<dbReference type="Pfam" id="PF02882">
    <property type="entry name" value="THF_DHG_CYH_C"/>
    <property type="match status" value="1"/>
</dbReference>
<dbReference type="PRINTS" id="PR00085">
    <property type="entry name" value="THFDHDRGNASE"/>
</dbReference>
<dbReference type="SUPFAM" id="SSF53223">
    <property type="entry name" value="Aminoacid dehydrogenase-like, N-terminal domain"/>
    <property type="match status" value="1"/>
</dbReference>
<dbReference type="SUPFAM" id="SSF51735">
    <property type="entry name" value="NAD(P)-binding Rossmann-fold domains"/>
    <property type="match status" value="1"/>
</dbReference>
<dbReference type="PROSITE" id="PS00766">
    <property type="entry name" value="THF_DHG_CYH_1"/>
    <property type="match status" value="1"/>
</dbReference>
<dbReference type="PROSITE" id="PS00767">
    <property type="entry name" value="THF_DHG_CYH_2"/>
    <property type="match status" value="1"/>
</dbReference>